<dbReference type="EC" id="6.1.1.14" evidence="1"/>
<dbReference type="EMBL" id="AP009351">
    <property type="protein sequence ID" value="BAF67740.1"/>
    <property type="molecule type" value="Genomic_DNA"/>
</dbReference>
<dbReference type="RefSeq" id="WP_001030080.1">
    <property type="nucleotide sequence ID" value="NZ_JBBIAE010000001.1"/>
</dbReference>
<dbReference type="SMR" id="A6QHA8"/>
<dbReference type="KEGG" id="sae:NWMN_1468"/>
<dbReference type="HOGENOM" id="CLU_015515_2_1_9"/>
<dbReference type="Proteomes" id="UP000006386">
    <property type="component" value="Chromosome"/>
</dbReference>
<dbReference type="GO" id="GO:0005737">
    <property type="term" value="C:cytoplasm"/>
    <property type="evidence" value="ECO:0007669"/>
    <property type="project" value="UniProtKB-SubCell"/>
</dbReference>
<dbReference type="GO" id="GO:0005524">
    <property type="term" value="F:ATP binding"/>
    <property type="evidence" value="ECO:0007669"/>
    <property type="project" value="UniProtKB-UniRule"/>
</dbReference>
<dbReference type="GO" id="GO:0140096">
    <property type="term" value="F:catalytic activity, acting on a protein"/>
    <property type="evidence" value="ECO:0007669"/>
    <property type="project" value="UniProtKB-ARBA"/>
</dbReference>
<dbReference type="GO" id="GO:0004820">
    <property type="term" value="F:glycine-tRNA ligase activity"/>
    <property type="evidence" value="ECO:0000250"/>
    <property type="project" value="UniProtKB"/>
</dbReference>
<dbReference type="GO" id="GO:0046983">
    <property type="term" value="F:protein dimerization activity"/>
    <property type="evidence" value="ECO:0000250"/>
    <property type="project" value="UniProtKB"/>
</dbReference>
<dbReference type="GO" id="GO:0016740">
    <property type="term" value="F:transferase activity"/>
    <property type="evidence" value="ECO:0007669"/>
    <property type="project" value="UniProtKB-ARBA"/>
</dbReference>
<dbReference type="GO" id="GO:0006426">
    <property type="term" value="P:glycyl-tRNA aminoacylation"/>
    <property type="evidence" value="ECO:0007669"/>
    <property type="project" value="UniProtKB-UniRule"/>
</dbReference>
<dbReference type="CDD" id="cd00774">
    <property type="entry name" value="GlyRS-like_core"/>
    <property type="match status" value="1"/>
</dbReference>
<dbReference type="CDD" id="cd00858">
    <property type="entry name" value="GlyRS_anticodon"/>
    <property type="match status" value="1"/>
</dbReference>
<dbReference type="FunFam" id="3.40.50.800:FF:000002">
    <property type="entry name" value="Glycine--tRNA ligase"/>
    <property type="match status" value="1"/>
</dbReference>
<dbReference type="Gene3D" id="3.30.40.230">
    <property type="match status" value="1"/>
</dbReference>
<dbReference type="Gene3D" id="3.40.50.800">
    <property type="entry name" value="Anticodon-binding domain"/>
    <property type="match status" value="1"/>
</dbReference>
<dbReference type="Gene3D" id="3.30.930.10">
    <property type="entry name" value="Bira Bifunctional Protein, Domain 2"/>
    <property type="match status" value="1"/>
</dbReference>
<dbReference type="HAMAP" id="MF_00253_B">
    <property type="entry name" value="Gly_tRNA_synth_B"/>
    <property type="match status" value="1"/>
</dbReference>
<dbReference type="InterPro" id="IPR002314">
    <property type="entry name" value="aa-tRNA-synt_IIb"/>
</dbReference>
<dbReference type="InterPro" id="IPR006195">
    <property type="entry name" value="aa-tRNA-synth_II"/>
</dbReference>
<dbReference type="InterPro" id="IPR045864">
    <property type="entry name" value="aa-tRNA-synth_II/BPL/LPL"/>
</dbReference>
<dbReference type="InterPro" id="IPR004154">
    <property type="entry name" value="Anticodon-bd"/>
</dbReference>
<dbReference type="InterPro" id="IPR036621">
    <property type="entry name" value="Anticodon-bd_dom_sf"/>
</dbReference>
<dbReference type="InterPro" id="IPR027031">
    <property type="entry name" value="Gly-tRNA_synthase/POLG2"/>
</dbReference>
<dbReference type="InterPro" id="IPR022961">
    <property type="entry name" value="Gly_tRNA_ligase_bac"/>
</dbReference>
<dbReference type="InterPro" id="IPR033731">
    <property type="entry name" value="GlyRS-like_core"/>
</dbReference>
<dbReference type="InterPro" id="IPR002315">
    <property type="entry name" value="tRNA-synt_gly"/>
</dbReference>
<dbReference type="NCBIfam" id="TIGR00389">
    <property type="entry name" value="glyS_dimeric"/>
    <property type="match status" value="1"/>
</dbReference>
<dbReference type="NCBIfam" id="NF003211">
    <property type="entry name" value="PRK04173.1"/>
    <property type="match status" value="1"/>
</dbReference>
<dbReference type="PANTHER" id="PTHR10745:SF8">
    <property type="entry name" value="DNA POLYMERASE SUBUNIT GAMMA-2, MITOCHONDRIAL"/>
    <property type="match status" value="1"/>
</dbReference>
<dbReference type="PANTHER" id="PTHR10745">
    <property type="entry name" value="GLYCYL-TRNA SYNTHETASE/DNA POLYMERASE SUBUNIT GAMMA-2"/>
    <property type="match status" value="1"/>
</dbReference>
<dbReference type="Pfam" id="PF03129">
    <property type="entry name" value="HGTP_anticodon"/>
    <property type="match status" value="1"/>
</dbReference>
<dbReference type="Pfam" id="PF00587">
    <property type="entry name" value="tRNA-synt_2b"/>
    <property type="match status" value="1"/>
</dbReference>
<dbReference type="PRINTS" id="PR01043">
    <property type="entry name" value="TRNASYNTHGLY"/>
</dbReference>
<dbReference type="SUPFAM" id="SSF52954">
    <property type="entry name" value="Class II aaRS ABD-related"/>
    <property type="match status" value="1"/>
</dbReference>
<dbReference type="SUPFAM" id="SSF55681">
    <property type="entry name" value="Class II aaRS and biotin synthetases"/>
    <property type="match status" value="1"/>
</dbReference>
<dbReference type="PROSITE" id="PS50862">
    <property type="entry name" value="AA_TRNA_LIGASE_II"/>
    <property type="match status" value="1"/>
</dbReference>
<feature type="chain" id="PRO_1000071873" description="Glycine--tRNA ligase">
    <location>
        <begin position="1"/>
        <end position="463"/>
    </location>
</feature>
<feature type="binding site" evidence="1">
    <location>
        <position position="98"/>
    </location>
    <ligand>
        <name>substrate</name>
    </ligand>
</feature>
<feature type="binding site" evidence="1">
    <location>
        <position position="174"/>
    </location>
    <ligand>
        <name>substrate</name>
    </ligand>
</feature>
<feature type="binding site" evidence="1">
    <location>
        <begin position="206"/>
        <end position="208"/>
    </location>
    <ligand>
        <name>ATP</name>
        <dbReference type="ChEBI" id="CHEBI:30616"/>
    </ligand>
</feature>
<feature type="binding site" evidence="1">
    <location>
        <begin position="216"/>
        <end position="221"/>
    </location>
    <ligand>
        <name>ATP</name>
        <dbReference type="ChEBI" id="CHEBI:30616"/>
    </ligand>
</feature>
<feature type="binding site" evidence="1">
    <location>
        <begin position="221"/>
        <end position="225"/>
    </location>
    <ligand>
        <name>substrate</name>
    </ligand>
</feature>
<feature type="binding site" evidence="1">
    <location>
        <begin position="290"/>
        <end position="291"/>
    </location>
    <ligand>
        <name>ATP</name>
        <dbReference type="ChEBI" id="CHEBI:30616"/>
    </ligand>
</feature>
<feature type="binding site" evidence="1">
    <location>
        <begin position="330"/>
        <end position="334"/>
    </location>
    <ligand>
        <name>substrate</name>
    </ligand>
</feature>
<feature type="binding site" evidence="1">
    <location>
        <begin position="334"/>
        <end position="337"/>
    </location>
    <ligand>
        <name>ATP</name>
        <dbReference type="ChEBI" id="CHEBI:30616"/>
    </ligand>
</feature>
<proteinExistence type="inferred from homology"/>
<comment type="function">
    <text evidence="1">Catalyzes the attachment of glycine to tRNA(Gly).</text>
</comment>
<comment type="catalytic activity">
    <reaction evidence="1">
        <text>tRNA(Gly) + glycine + ATP = glycyl-tRNA(Gly) + AMP + diphosphate</text>
        <dbReference type="Rhea" id="RHEA:16013"/>
        <dbReference type="Rhea" id="RHEA-COMP:9664"/>
        <dbReference type="Rhea" id="RHEA-COMP:9683"/>
        <dbReference type="ChEBI" id="CHEBI:30616"/>
        <dbReference type="ChEBI" id="CHEBI:33019"/>
        <dbReference type="ChEBI" id="CHEBI:57305"/>
        <dbReference type="ChEBI" id="CHEBI:78442"/>
        <dbReference type="ChEBI" id="CHEBI:78522"/>
        <dbReference type="ChEBI" id="CHEBI:456215"/>
        <dbReference type="EC" id="6.1.1.14"/>
    </reaction>
</comment>
<comment type="subunit">
    <text evidence="1">Homodimer.</text>
</comment>
<comment type="subcellular location">
    <subcellularLocation>
        <location evidence="1">Cytoplasm</location>
    </subcellularLocation>
</comment>
<comment type="similarity">
    <text evidence="1">Belongs to the class-II aminoacyl-tRNA synthetase family.</text>
</comment>
<reference key="1">
    <citation type="journal article" date="2008" name="J. Bacteriol.">
        <title>Genome sequence of Staphylococcus aureus strain Newman and comparative analysis of staphylococcal genomes: polymorphism and evolution of two major pathogenicity islands.</title>
        <authorList>
            <person name="Baba T."/>
            <person name="Bae T."/>
            <person name="Schneewind O."/>
            <person name="Takeuchi F."/>
            <person name="Hiramatsu K."/>
        </authorList>
    </citation>
    <scope>NUCLEOTIDE SEQUENCE [LARGE SCALE GENOMIC DNA]</scope>
    <source>
        <strain>Newman</strain>
    </source>
</reference>
<protein>
    <recommendedName>
        <fullName evidence="1">Glycine--tRNA ligase</fullName>
        <ecNumber evidence="1">6.1.1.14</ecNumber>
    </recommendedName>
    <alternativeName>
        <fullName evidence="1">Glycyl-tRNA synthetase</fullName>
        <shortName evidence="1">GlyRS</shortName>
    </alternativeName>
</protein>
<organism>
    <name type="scientific">Staphylococcus aureus (strain Newman)</name>
    <dbReference type="NCBI Taxonomy" id="426430"/>
    <lineage>
        <taxon>Bacteria</taxon>
        <taxon>Bacillati</taxon>
        <taxon>Bacillota</taxon>
        <taxon>Bacilli</taxon>
        <taxon>Bacillales</taxon>
        <taxon>Staphylococcaceae</taxon>
        <taxon>Staphylococcus</taxon>
    </lineage>
</organism>
<sequence>MAKDMDTIVSLAKHRGFVFPGSDIYGGLSNTWDYGPLGVELKNNVKKAWWQKFITQSPFNVGIDAAILMNPKVWEASGHLNNFNDPMIDNKDSKIRYRADKLIEDYMQDVKGDENFIADGLSFEQMKKIIDDEGIVCPVSKTANWTEIRQFNLMFKTFQGVTEDSTNEIFLRPETAQGIFVNYKNVQRSMRKKLPFGIGQIGKSFRNEITPGNFIFRTREFEQMELEFFCKPGEEIEWQNYWKTFASDWLTSLNMSSENMRLRDHDEDELSHYSNATTDIEYKFPFGWGELWGIASRTDFDLRKHAEHSGEDFRYHDPETNEKYIPYCIEPSLGADRVTLAFLCDAYDEEGVEGSKDARTVLHFHPALAPYKAAILPLSKKLSGEAIKIFEQLSSKFSIDFDESQSIGKRYRRQDEIGTPYCVTFDFDSLEDNQVTVRDRDSMEQVRMPISELEAFLTEKTKF</sequence>
<gene>
    <name evidence="1" type="primary">glyQS</name>
    <name type="ordered locus">NWMN_1468</name>
</gene>
<evidence type="ECO:0000255" key="1">
    <source>
        <dbReference type="HAMAP-Rule" id="MF_00253"/>
    </source>
</evidence>
<keyword id="KW-0030">Aminoacyl-tRNA synthetase</keyword>
<keyword id="KW-0067">ATP-binding</keyword>
<keyword id="KW-0963">Cytoplasm</keyword>
<keyword id="KW-0436">Ligase</keyword>
<keyword id="KW-0547">Nucleotide-binding</keyword>
<keyword id="KW-0648">Protein biosynthesis</keyword>
<name>SYG_STAAE</name>
<accession>A6QHA8</accession>